<reference key="1">
    <citation type="submission" date="2007-02" db="EMBL/GenBank/DDBJ databases">
        <title>Complete sequence of Mycobacterium sp. JLS.</title>
        <authorList>
            <consortium name="US DOE Joint Genome Institute"/>
            <person name="Copeland A."/>
            <person name="Lucas S."/>
            <person name="Lapidus A."/>
            <person name="Barry K."/>
            <person name="Detter J.C."/>
            <person name="Glavina del Rio T."/>
            <person name="Hammon N."/>
            <person name="Israni S."/>
            <person name="Dalin E."/>
            <person name="Tice H."/>
            <person name="Pitluck S."/>
            <person name="Chain P."/>
            <person name="Malfatti S."/>
            <person name="Shin M."/>
            <person name="Vergez L."/>
            <person name="Schmutz J."/>
            <person name="Larimer F."/>
            <person name="Land M."/>
            <person name="Hauser L."/>
            <person name="Kyrpides N."/>
            <person name="Mikhailova N."/>
            <person name="Miller C.D."/>
            <person name="Anderson A.J."/>
            <person name="Sims R.C."/>
            <person name="Richardson P."/>
        </authorList>
    </citation>
    <scope>NUCLEOTIDE SEQUENCE [LARGE SCALE GENOMIC DNA]</scope>
    <source>
        <strain>JLS</strain>
    </source>
</reference>
<comment type="function">
    <text evidence="1">Involved in the biosynthesis of branched-chain amino acids (BCAA). Catalyzes an alkyl-migration followed by a ketol-acid reduction of (S)-2-acetolactate (S2AL) to yield (R)-2,3-dihydroxy-isovalerate. In the isomerase reaction, S2AL is rearranged via a Mg-dependent methyl migration to produce 3-hydroxy-3-methyl-2-ketobutyrate (HMKB). In the reductase reaction, this 2-ketoacid undergoes a metal-dependent reduction by NADPH to yield (R)-2,3-dihydroxy-isovalerate.</text>
</comment>
<comment type="catalytic activity">
    <reaction evidence="1">
        <text>(2R)-2,3-dihydroxy-3-methylbutanoate + NADP(+) = (2S)-2-acetolactate + NADPH + H(+)</text>
        <dbReference type="Rhea" id="RHEA:22068"/>
        <dbReference type="ChEBI" id="CHEBI:15378"/>
        <dbReference type="ChEBI" id="CHEBI:49072"/>
        <dbReference type="ChEBI" id="CHEBI:57783"/>
        <dbReference type="ChEBI" id="CHEBI:58349"/>
        <dbReference type="ChEBI" id="CHEBI:58476"/>
        <dbReference type="EC" id="1.1.1.86"/>
    </reaction>
</comment>
<comment type="catalytic activity">
    <reaction evidence="1">
        <text>(2R,3R)-2,3-dihydroxy-3-methylpentanoate + NADP(+) = (S)-2-ethyl-2-hydroxy-3-oxobutanoate + NADPH + H(+)</text>
        <dbReference type="Rhea" id="RHEA:13493"/>
        <dbReference type="ChEBI" id="CHEBI:15378"/>
        <dbReference type="ChEBI" id="CHEBI:49256"/>
        <dbReference type="ChEBI" id="CHEBI:49258"/>
        <dbReference type="ChEBI" id="CHEBI:57783"/>
        <dbReference type="ChEBI" id="CHEBI:58349"/>
        <dbReference type="EC" id="1.1.1.86"/>
    </reaction>
</comment>
<comment type="cofactor">
    <cofactor evidence="1">
        <name>Mg(2+)</name>
        <dbReference type="ChEBI" id="CHEBI:18420"/>
    </cofactor>
    <text evidence="1">Binds 2 magnesium ions per subunit.</text>
</comment>
<comment type="pathway">
    <text evidence="1">Amino-acid biosynthesis; L-isoleucine biosynthesis; L-isoleucine from 2-oxobutanoate: step 2/4.</text>
</comment>
<comment type="pathway">
    <text evidence="1">Amino-acid biosynthesis; L-valine biosynthesis; L-valine from pyruvate: step 2/4.</text>
</comment>
<comment type="similarity">
    <text evidence="1">Belongs to the ketol-acid reductoisomerase family.</text>
</comment>
<feature type="chain" id="PRO_1000050540" description="Ketol-acid reductoisomerase (NADP(+))">
    <location>
        <begin position="1"/>
        <end position="337"/>
    </location>
</feature>
<feature type="domain" description="KARI N-terminal Rossmann" evidence="2">
    <location>
        <begin position="3"/>
        <end position="183"/>
    </location>
</feature>
<feature type="domain" description="KARI C-terminal knotted" evidence="3">
    <location>
        <begin position="184"/>
        <end position="329"/>
    </location>
</feature>
<feature type="active site" evidence="1">
    <location>
        <position position="109"/>
    </location>
</feature>
<feature type="binding site" evidence="1">
    <location>
        <begin position="26"/>
        <end position="29"/>
    </location>
    <ligand>
        <name>NADP(+)</name>
        <dbReference type="ChEBI" id="CHEBI:58349"/>
    </ligand>
</feature>
<feature type="binding site" evidence="1">
    <location>
        <position position="49"/>
    </location>
    <ligand>
        <name>NADP(+)</name>
        <dbReference type="ChEBI" id="CHEBI:58349"/>
    </ligand>
</feature>
<feature type="binding site" evidence="1">
    <location>
        <position position="52"/>
    </location>
    <ligand>
        <name>NADP(+)</name>
        <dbReference type="ChEBI" id="CHEBI:58349"/>
    </ligand>
</feature>
<feature type="binding site" evidence="1">
    <location>
        <position position="54"/>
    </location>
    <ligand>
        <name>NADP(+)</name>
        <dbReference type="ChEBI" id="CHEBI:58349"/>
    </ligand>
</feature>
<feature type="binding site" evidence="1">
    <location>
        <begin position="84"/>
        <end position="87"/>
    </location>
    <ligand>
        <name>NADP(+)</name>
        <dbReference type="ChEBI" id="CHEBI:58349"/>
    </ligand>
</feature>
<feature type="binding site" evidence="1">
    <location>
        <position position="135"/>
    </location>
    <ligand>
        <name>NADP(+)</name>
        <dbReference type="ChEBI" id="CHEBI:58349"/>
    </ligand>
</feature>
<feature type="binding site" evidence="1">
    <location>
        <position position="192"/>
    </location>
    <ligand>
        <name>Mg(2+)</name>
        <dbReference type="ChEBI" id="CHEBI:18420"/>
        <label>1</label>
    </ligand>
</feature>
<feature type="binding site" evidence="1">
    <location>
        <position position="192"/>
    </location>
    <ligand>
        <name>Mg(2+)</name>
        <dbReference type="ChEBI" id="CHEBI:18420"/>
        <label>2</label>
    </ligand>
</feature>
<feature type="binding site" evidence="1">
    <location>
        <position position="196"/>
    </location>
    <ligand>
        <name>Mg(2+)</name>
        <dbReference type="ChEBI" id="CHEBI:18420"/>
        <label>1</label>
    </ligand>
</feature>
<feature type="binding site" evidence="1">
    <location>
        <position position="228"/>
    </location>
    <ligand>
        <name>Mg(2+)</name>
        <dbReference type="ChEBI" id="CHEBI:18420"/>
        <label>2</label>
    </ligand>
</feature>
<feature type="binding site" evidence="1">
    <location>
        <position position="232"/>
    </location>
    <ligand>
        <name>Mg(2+)</name>
        <dbReference type="ChEBI" id="CHEBI:18420"/>
        <label>2</label>
    </ligand>
</feature>
<feature type="binding site" evidence="1">
    <location>
        <position position="253"/>
    </location>
    <ligand>
        <name>substrate</name>
    </ligand>
</feature>
<organism>
    <name type="scientific">Mycobacterium sp. (strain JLS)</name>
    <dbReference type="NCBI Taxonomy" id="164757"/>
    <lineage>
        <taxon>Bacteria</taxon>
        <taxon>Bacillati</taxon>
        <taxon>Actinomycetota</taxon>
        <taxon>Actinomycetes</taxon>
        <taxon>Mycobacteriales</taxon>
        <taxon>Mycobacteriaceae</taxon>
        <taxon>Mycobacterium</taxon>
    </lineage>
</organism>
<dbReference type="EC" id="1.1.1.86" evidence="1"/>
<dbReference type="EMBL" id="CP000580">
    <property type="protein sequence ID" value="ABN97676.1"/>
    <property type="molecule type" value="Genomic_DNA"/>
</dbReference>
<dbReference type="SMR" id="A3PXP9"/>
<dbReference type="KEGG" id="mjl:Mjls_1888"/>
<dbReference type="HOGENOM" id="CLU_033821_0_1_11"/>
<dbReference type="BioCyc" id="MSP164757:G1G8C-1905-MONOMER"/>
<dbReference type="UniPathway" id="UPA00047">
    <property type="reaction ID" value="UER00056"/>
</dbReference>
<dbReference type="UniPathway" id="UPA00049">
    <property type="reaction ID" value="UER00060"/>
</dbReference>
<dbReference type="GO" id="GO:0005829">
    <property type="term" value="C:cytosol"/>
    <property type="evidence" value="ECO:0007669"/>
    <property type="project" value="TreeGrafter"/>
</dbReference>
<dbReference type="GO" id="GO:0004455">
    <property type="term" value="F:ketol-acid reductoisomerase activity"/>
    <property type="evidence" value="ECO:0007669"/>
    <property type="project" value="UniProtKB-UniRule"/>
</dbReference>
<dbReference type="GO" id="GO:0000287">
    <property type="term" value="F:magnesium ion binding"/>
    <property type="evidence" value="ECO:0007669"/>
    <property type="project" value="UniProtKB-UniRule"/>
</dbReference>
<dbReference type="GO" id="GO:0050661">
    <property type="term" value="F:NADP binding"/>
    <property type="evidence" value="ECO:0007669"/>
    <property type="project" value="InterPro"/>
</dbReference>
<dbReference type="GO" id="GO:0009097">
    <property type="term" value="P:isoleucine biosynthetic process"/>
    <property type="evidence" value="ECO:0007669"/>
    <property type="project" value="UniProtKB-UniRule"/>
</dbReference>
<dbReference type="GO" id="GO:0009099">
    <property type="term" value="P:L-valine biosynthetic process"/>
    <property type="evidence" value="ECO:0007669"/>
    <property type="project" value="UniProtKB-UniRule"/>
</dbReference>
<dbReference type="FunFam" id="3.40.50.720:FF:000023">
    <property type="entry name" value="Ketol-acid reductoisomerase (NADP(+))"/>
    <property type="match status" value="1"/>
</dbReference>
<dbReference type="Gene3D" id="6.10.240.10">
    <property type="match status" value="1"/>
</dbReference>
<dbReference type="Gene3D" id="3.40.50.720">
    <property type="entry name" value="NAD(P)-binding Rossmann-like Domain"/>
    <property type="match status" value="1"/>
</dbReference>
<dbReference type="HAMAP" id="MF_00435">
    <property type="entry name" value="IlvC"/>
    <property type="match status" value="1"/>
</dbReference>
<dbReference type="InterPro" id="IPR008927">
    <property type="entry name" value="6-PGluconate_DH-like_C_sf"/>
</dbReference>
<dbReference type="InterPro" id="IPR013023">
    <property type="entry name" value="KARI"/>
</dbReference>
<dbReference type="InterPro" id="IPR000506">
    <property type="entry name" value="KARI_C"/>
</dbReference>
<dbReference type="InterPro" id="IPR013116">
    <property type="entry name" value="KARI_N"/>
</dbReference>
<dbReference type="InterPro" id="IPR014359">
    <property type="entry name" value="KARI_prok"/>
</dbReference>
<dbReference type="InterPro" id="IPR036291">
    <property type="entry name" value="NAD(P)-bd_dom_sf"/>
</dbReference>
<dbReference type="NCBIfam" id="TIGR00465">
    <property type="entry name" value="ilvC"/>
    <property type="match status" value="1"/>
</dbReference>
<dbReference type="NCBIfam" id="NF004017">
    <property type="entry name" value="PRK05479.1"/>
    <property type="match status" value="1"/>
</dbReference>
<dbReference type="PANTHER" id="PTHR21371">
    <property type="entry name" value="KETOL-ACID REDUCTOISOMERASE, MITOCHONDRIAL"/>
    <property type="match status" value="1"/>
</dbReference>
<dbReference type="PANTHER" id="PTHR21371:SF1">
    <property type="entry name" value="KETOL-ACID REDUCTOISOMERASE, MITOCHONDRIAL"/>
    <property type="match status" value="1"/>
</dbReference>
<dbReference type="Pfam" id="PF01450">
    <property type="entry name" value="KARI_C"/>
    <property type="match status" value="1"/>
</dbReference>
<dbReference type="Pfam" id="PF07991">
    <property type="entry name" value="KARI_N"/>
    <property type="match status" value="1"/>
</dbReference>
<dbReference type="PIRSF" id="PIRSF000116">
    <property type="entry name" value="IlvC_gammaproteo"/>
    <property type="match status" value="1"/>
</dbReference>
<dbReference type="SUPFAM" id="SSF48179">
    <property type="entry name" value="6-phosphogluconate dehydrogenase C-terminal domain-like"/>
    <property type="match status" value="1"/>
</dbReference>
<dbReference type="SUPFAM" id="SSF51735">
    <property type="entry name" value="NAD(P)-binding Rossmann-fold domains"/>
    <property type="match status" value="1"/>
</dbReference>
<dbReference type="PROSITE" id="PS51851">
    <property type="entry name" value="KARI_C"/>
    <property type="match status" value="1"/>
</dbReference>
<dbReference type="PROSITE" id="PS51850">
    <property type="entry name" value="KARI_N"/>
    <property type="match status" value="1"/>
</dbReference>
<sequence length="337" mass="36536">MAVEMFYDDDADLSIIQGRKVAVIGYGSQGHAHSLSLRDSGVQVKVGLKEGSKSREKVTEQGLEVDTPAEVAKWADVIMLLAPDTAQAEIFTNDIEPNLEDGNALFFGHGLNIHFGLIKPPANVTVGMVAPKGPGHLVRRQFVDGKGVPCLIAIDQDPKGEGQALALSYAAAIGGARAGVIKTTFKEETETDLFGEQAVLCGGTEELVKTGFEVMVEAGYAPEMAYFEVLHELKLIVDLMYEGGIARMNYSVSDTAEFGGYLSGPRVIDADTKERMRAILKDIQDGTFVKRLVANVEGGNKELEDLRKKNAEHPIEVTGKKLRDLMSWVDRPITETA</sequence>
<gene>
    <name evidence="1" type="primary">ilvC</name>
    <name type="ordered locus">Mjls_1888</name>
</gene>
<name>ILVC_MYCSJ</name>
<evidence type="ECO:0000255" key="1">
    <source>
        <dbReference type="HAMAP-Rule" id="MF_00435"/>
    </source>
</evidence>
<evidence type="ECO:0000255" key="2">
    <source>
        <dbReference type="PROSITE-ProRule" id="PRU01197"/>
    </source>
</evidence>
<evidence type="ECO:0000255" key="3">
    <source>
        <dbReference type="PROSITE-ProRule" id="PRU01198"/>
    </source>
</evidence>
<proteinExistence type="inferred from homology"/>
<protein>
    <recommendedName>
        <fullName evidence="1">Ketol-acid reductoisomerase (NADP(+))</fullName>
        <shortName evidence="1">KARI</shortName>
        <ecNumber evidence="1">1.1.1.86</ecNumber>
    </recommendedName>
    <alternativeName>
        <fullName evidence="1">Acetohydroxy-acid isomeroreductase</fullName>
        <shortName evidence="1">AHIR</shortName>
    </alternativeName>
    <alternativeName>
        <fullName evidence="1">Alpha-keto-beta-hydroxylacyl reductoisomerase</fullName>
    </alternativeName>
    <alternativeName>
        <fullName evidence="1">Ketol-acid reductoisomerase type 1</fullName>
    </alternativeName>
    <alternativeName>
        <fullName evidence="1">Ketol-acid reductoisomerase type I</fullName>
    </alternativeName>
</protein>
<accession>A3PXP9</accession>
<keyword id="KW-0028">Amino-acid biosynthesis</keyword>
<keyword id="KW-0100">Branched-chain amino acid biosynthesis</keyword>
<keyword id="KW-0460">Magnesium</keyword>
<keyword id="KW-0479">Metal-binding</keyword>
<keyword id="KW-0521">NADP</keyword>
<keyword id="KW-0560">Oxidoreductase</keyword>